<keyword id="KW-0002">3D-structure</keyword>
<keyword id="KW-0903">Direct protein sequencing</keyword>
<keyword id="KW-0274">FAD</keyword>
<keyword id="KW-0285">Flavoprotein</keyword>
<keyword id="KW-0288">FMN</keyword>
<keyword id="KW-0378">Hydrolase</keyword>
<keyword id="KW-1185">Reference proteome</keyword>
<keyword id="KW-0964">Secreted</keyword>
<keyword id="KW-0732">Signal</keyword>
<dbReference type="EC" id="3.5.3.-"/>
<dbReference type="EMBL" id="AF100668">
    <property type="protein sequence ID" value="AAF06719.1"/>
    <property type="molecule type" value="Genomic_DNA"/>
</dbReference>
<dbReference type="EMBL" id="AE015924">
    <property type="protein sequence ID" value="AAQ66478.1"/>
    <property type="molecule type" value="Genomic_DNA"/>
</dbReference>
<dbReference type="RefSeq" id="WP_005873463.1">
    <property type="nucleotide sequence ID" value="NC_002950.2"/>
</dbReference>
<dbReference type="PDB" id="4YT9">
    <property type="method" value="X-ray"/>
    <property type="resolution" value="1.50 A"/>
    <property type="chains" value="A=44-475"/>
</dbReference>
<dbReference type="PDB" id="4YTB">
    <property type="method" value="X-ray"/>
    <property type="resolution" value="1.40 A"/>
    <property type="chains" value="A=44-475"/>
</dbReference>
<dbReference type="PDB" id="4YTG">
    <property type="method" value="X-ray"/>
    <property type="resolution" value="1.80 A"/>
    <property type="chains" value="A=44-475"/>
</dbReference>
<dbReference type="PDB" id="5AK7">
    <property type="method" value="X-ray"/>
    <property type="resolution" value="1.46 A"/>
    <property type="chains" value="A=49-484"/>
</dbReference>
<dbReference type="PDB" id="5AK8">
    <property type="method" value="X-ray"/>
    <property type="resolution" value="1.48 A"/>
    <property type="chains" value="A=49-484"/>
</dbReference>
<dbReference type="PDB" id="6I0X">
    <property type="method" value="X-ray"/>
    <property type="resolution" value="1.60 A"/>
    <property type="chains" value="A/B=44-475"/>
</dbReference>
<dbReference type="PDBsum" id="4YT9"/>
<dbReference type="PDBsum" id="4YTB"/>
<dbReference type="PDBsum" id="4YTG"/>
<dbReference type="PDBsum" id="5AK7"/>
<dbReference type="PDBsum" id="5AK8"/>
<dbReference type="PDBsum" id="6I0X"/>
<dbReference type="SMR" id="Q9RQJ2"/>
<dbReference type="STRING" id="242619.PG_1424"/>
<dbReference type="EnsemblBacteria" id="AAQ66478">
    <property type="protein sequence ID" value="AAQ66478"/>
    <property type="gene ID" value="PG_1424"/>
</dbReference>
<dbReference type="GeneID" id="29256112"/>
<dbReference type="KEGG" id="pgi:PG_1424"/>
<dbReference type="eggNOG" id="COG2957">
    <property type="taxonomic scope" value="Bacteria"/>
</dbReference>
<dbReference type="HOGENOM" id="CLU_026427_0_0_10"/>
<dbReference type="BRENDA" id="3.5.3.15">
    <property type="organism ID" value="756"/>
</dbReference>
<dbReference type="SABIO-RK" id="Q9RQJ2"/>
<dbReference type="EvolutionaryTrace" id="Q9RQJ2"/>
<dbReference type="Proteomes" id="UP000000588">
    <property type="component" value="Chromosome"/>
</dbReference>
<dbReference type="GO" id="GO:0005576">
    <property type="term" value="C:extracellular region"/>
    <property type="evidence" value="ECO:0007669"/>
    <property type="project" value="UniProtKB-SubCell"/>
</dbReference>
<dbReference type="GO" id="GO:0047632">
    <property type="term" value="F:agmatine deiminase activity"/>
    <property type="evidence" value="ECO:0007669"/>
    <property type="project" value="TreeGrafter"/>
</dbReference>
<dbReference type="GO" id="GO:0004668">
    <property type="term" value="F:protein-arginine deiminase activity"/>
    <property type="evidence" value="ECO:0007669"/>
    <property type="project" value="InterPro"/>
</dbReference>
<dbReference type="GO" id="GO:0009446">
    <property type="term" value="P:putrescine biosynthetic process"/>
    <property type="evidence" value="ECO:0007669"/>
    <property type="project" value="InterPro"/>
</dbReference>
<dbReference type="DisProt" id="DP02931"/>
<dbReference type="Gene3D" id="3.75.10.10">
    <property type="entry name" value="L-arginine/glycine Amidinotransferase, Chain A"/>
    <property type="match status" value="1"/>
</dbReference>
<dbReference type="InterPro" id="IPR007466">
    <property type="entry name" value="Peptidyl-Arg-deiminase_porph"/>
</dbReference>
<dbReference type="PANTHER" id="PTHR31377">
    <property type="entry name" value="AGMATINE DEIMINASE-RELATED"/>
    <property type="match status" value="1"/>
</dbReference>
<dbReference type="PANTHER" id="PTHR31377:SF0">
    <property type="entry name" value="AGMATINE DEIMINASE-RELATED"/>
    <property type="match status" value="1"/>
</dbReference>
<dbReference type="Pfam" id="PF04371">
    <property type="entry name" value="PAD_porph"/>
    <property type="match status" value="1"/>
</dbReference>
<dbReference type="SUPFAM" id="SSF55909">
    <property type="entry name" value="Pentein"/>
    <property type="match status" value="1"/>
</dbReference>
<evidence type="ECO:0000250" key="1"/>
<evidence type="ECO:0000255" key="2"/>
<evidence type="ECO:0000269" key="3">
    <source>
    </source>
</evidence>
<evidence type="ECO:0000305" key="4"/>
<evidence type="ECO:0000305" key="5">
    <source>
    </source>
</evidence>
<evidence type="ECO:0007829" key="6">
    <source>
        <dbReference type="PDB" id="4YTB"/>
    </source>
</evidence>
<evidence type="ECO:0007829" key="7">
    <source>
        <dbReference type="PDB" id="6I0X"/>
    </source>
</evidence>
<protein>
    <recommendedName>
        <fullName>Peptidylarginine deiminase</fullName>
        <ecNumber>3.5.3.-</ecNumber>
    </recommendedName>
</protein>
<reference key="1">
    <citation type="journal article" date="1999" name="Infect. Immun.">
        <title>Purification, characterization, and sequence analysis of a potential virulence factor from Porphyromonas gingivalis, peptidylarginine deiminase.</title>
        <authorList>
            <person name="McGraw W.T."/>
            <person name="Potempa J."/>
            <person name="Farley D."/>
            <person name="Travis J."/>
        </authorList>
    </citation>
    <scope>NUCLEOTIDE SEQUENCE [GENOMIC DNA]</scope>
    <scope>PROTEIN SEQUENCE OF 44-73</scope>
    <scope>FUNCTION</scope>
    <scope>ENZYME ACTIVITY</scope>
    <scope>ACTIVITY REGULATION</scope>
    <scope>BIOPHYSICOCHEMICAL PROPERTIES</scope>
    <scope>POSSIBLE COFACTOR</scope>
    <source>
        <strain>ATCC BAA-308 / W83</strain>
    </source>
</reference>
<reference key="2">
    <citation type="journal article" date="2003" name="J. Bacteriol.">
        <title>Complete genome sequence of the oral pathogenic bacterium Porphyromonas gingivalis strain W83.</title>
        <authorList>
            <person name="Nelson K.E."/>
            <person name="Fleischmann R.D."/>
            <person name="DeBoy R.T."/>
            <person name="Paulsen I.T."/>
            <person name="Fouts D.E."/>
            <person name="Eisen J.A."/>
            <person name="Daugherty S.C."/>
            <person name="Dodson R.J."/>
            <person name="Durkin A.S."/>
            <person name="Gwinn M.L."/>
            <person name="Haft D.H."/>
            <person name="Kolonay J.F."/>
            <person name="Nelson W.C."/>
            <person name="Mason T.M."/>
            <person name="Tallon L."/>
            <person name="Gray J."/>
            <person name="Granger D."/>
            <person name="Tettelin H."/>
            <person name="Dong H."/>
            <person name="Galvin J.L."/>
            <person name="Duncan M.J."/>
            <person name="Dewhirst F.E."/>
            <person name="Fraser C.M."/>
        </authorList>
    </citation>
    <scope>NUCLEOTIDE SEQUENCE [LARGE SCALE GENOMIC DNA]</scope>
    <source>
        <strain>ATCC BAA-308 / W83</strain>
    </source>
</reference>
<proteinExistence type="evidence at protein level"/>
<gene>
    <name type="ordered locus">PG_1424</name>
</gene>
<comment type="function">
    <text evidence="3">Deiminates the guanidino group of C-terminal arginine residues on a variety of peptides, including the vasoregulatory peptide-hormone bradykinin, to yield ammonia and a citrulline residue. May promote the growth of the pathogen in the periodontal pocket by producing ammonia, ammonia having a protective effect during acidic cleaning cycles in the mouth.</text>
</comment>
<comment type="cofactor">
    <cofactor evidence="4">
        <name>FAD</name>
        <dbReference type="ChEBI" id="CHEBI:57692"/>
    </cofactor>
    <cofactor evidence="4">
        <name>FMN</name>
        <dbReference type="ChEBI" id="CHEBI:58210"/>
    </cofactor>
</comment>
<comment type="activity regulation">
    <text evidence="3">Inhibited by cysteine and TLCK. Inhibited by high concentration of thiourea and thio-L-citrulline.</text>
</comment>
<comment type="biophysicochemical properties">
    <kinetics>
        <KM evidence="3">2.9 uM for Benzoyl-L-arginine</KM>
        <KM evidence="3">28 uM for Benzoylglycyl-L-arginine</KM>
        <KM evidence="3">152 uM for BAA</KM>
        <KM evidence="3">874 uM for BAEE</KM>
        <KM evidence="3">141 uM for L-arginine</KM>
        <KM evidence="3">47 uM for BK</KM>
        <Vmax evidence="3">104.0 nmol/min/mg enzyme with Benzoyl-L-arginine as substrate</Vmax>
        <Vmax evidence="3">186.0 nmol/min/mg enzyme with Benzoylglycyl-L-arginine as substrate</Vmax>
        <Vmax evidence="3">77.0 nmol/min/mg enzyme with BAA as substrate</Vmax>
        <Vmax evidence="3">90.0 nmol/min/mg enzyme with BAEE as substrate</Vmax>
        <Vmax evidence="3">26.0 nmol/min/mg enzyme with L-arginine as substrate</Vmax>
        <Vmax evidence="3">117.0 nmol/min/mg enzyme with BK as substrate</Vmax>
    </kinetics>
    <phDependence>
        <text evidence="3">Optimum pH is 9.3.</text>
    </phDependence>
</comment>
<comment type="subcellular location">
    <subcellularLocation>
        <location evidence="4">Secreted</location>
    </subcellularLocation>
</comment>
<comment type="similarity">
    <text evidence="4">Belongs to the agmatine deiminase family.</text>
</comment>
<organism>
    <name type="scientific">Porphyromonas gingivalis (strain ATCC BAA-308 / W83)</name>
    <dbReference type="NCBI Taxonomy" id="242619"/>
    <lineage>
        <taxon>Bacteria</taxon>
        <taxon>Pseudomonadati</taxon>
        <taxon>Bacteroidota</taxon>
        <taxon>Bacteroidia</taxon>
        <taxon>Bacteroidales</taxon>
        <taxon>Porphyromonadaceae</taxon>
        <taxon>Porphyromonas</taxon>
    </lineage>
</organism>
<sequence length="556" mass="61730">MKKLLQAKALILALGLFQLPAIAQTQMQADRTNGQFATEEMQRAFQETNPPAGPVRAIAEYERSAAVLVRYPFGIPMELIKELAKNDKVITIVASESQKNTVITQYTQSGVNLSNCDFIIAKTDSYWTRDYTGWFAMYDTNKVGLVDFIYNRPRPNDDEFPKYEAQYLGIEMFGMKLKQTGGNYMTDGYGSAVQSHIAYTENSSLSQAQVNQKMKDYLGITHHDVVQDPNGEYINHVDCWGKYLAPNKILIRKVPDNHPQHQALEDMAAYFAAQTCAWGTKYEVYRALATNEQPYTNSLILNNRVFVPVNGPASVDNDALNVYKTAMPGYEIIGVKGASGTPWLGTDALHCRTHEVADKGYLYIKHYPILGEQAGPDYKIEADVVSCANATISPVQCYYRINGSGSFKAADMTMESTGHYTYSFTGLNKNDKVEYYISAADNSGRKETYPFIGEPDPFKFTCMNETNTCTVTGAAKALRAWFNAGRSELAVSVSLNIAGTYRIKLYNTAGEEVAAMTKELVAGTSVFSMDVYSQAPGTYVLVVEGNGIRETMKILK</sequence>
<accession>Q9RQJ2</accession>
<accession>Q7BW72</accession>
<feature type="signal peptide" evidence="2">
    <location>
        <begin position="1"/>
        <end position="23"/>
    </location>
</feature>
<feature type="propeptide" id="PRO_0000001044" evidence="5">
    <location>
        <begin position="24"/>
        <end position="43"/>
    </location>
</feature>
<feature type="chain" id="PRO_0000001045" description="Peptidylarginine deiminase">
    <location>
        <begin position="44"/>
        <end position="556"/>
    </location>
</feature>
<feature type="active site" description="Amidino-cysteine intermediate" evidence="1">
    <location>
        <position position="351"/>
    </location>
</feature>
<feature type="strand" evidence="6">
    <location>
        <begin position="52"/>
        <end position="57"/>
    </location>
</feature>
<feature type="strand" evidence="6">
    <location>
        <begin position="64"/>
        <end position="72"/>
    </location>
</feature>
<feature type="helix" evidence="6">
    <location>
        <begin position="77"/>
        <end position="86"/>
    </location>
</feature>
<feature type="strand" evidence="6">
    <location>
        <begin position="89"/>
        <end position="95"/>
    </location>
</feature>
<feature type="helix" evidence="6">
    <location>
        <begin position="96"/>
        <end position="109"/>
    </location>
</feature>
<feature type="helix" evidence="6">
    <location>
        <begin position="113"/>
        <end position="115"/>
    </location>
</feature>
<feature type="strand" evidence="6">
    <location>
        <begin position="116"/>
        <end position="120"/>
    </location>
</feature>
<feature type="helix" evidence="6">
    <location>
        <begin position="128"/>
        <end position="131"/>
    </location>
</feature>
<feature type="strand" evidence="6">
    <location>
        <begin position="134"/>
        <end position="138"/>
    </location>
</feature>
<feature type="turn" evidence="6">
    <location>
        <begin position="139"/>
        <end position="141"/>
    </location>
</feature>
<feature type="strand" evidence="6">
    <location>
        <begin position="142"/>
        <end position="153"/>
    </location>
</feature>
<feature type="helix" evidence="6">
    <location>
        <begin position="155"/>
        <end position="159"/>
    </location>
</feature>
<feature type="helix" evidence="6">
    <location>
        <begin position="161"/>
        <end position="168"/>
    </location>
</feature>
<feature type="strand" evidence="6">
    <location>
        <begin position="172"/>
        <end position="179"/>
    </location>
</feature>
<feature type="helix" evidence="6">
    <location>
        <begin position="181"/>
        <end position="183"/>
    </location>
</feature>
<feature type="strand" evidence="6">
    <location>
        <begin position="188"/>
        <end position="195"/>
    </location>
</feature>
<feature type="helix" evidence="6">
    <location>
        <begin position="197"/>
        <end position="200"/>
    </location>
</feature>
<feature type="turn" evidence="6">
    <location>
        <begin position="201"/>
        <end position="204"/>
    </location>
</feature>
<feature type="helix" evidence="6">
    <location>
        <begin position="207"/>
        <end position="218"/>
    </location>
</feature>
<feature type="strand" evidence="6">
    <location>
        <begin position="221"/>
        <end position="226"/>
    </location>
</feature>
<feature type="strand" evidence="6">
    <location>
        <begin position="232"/>
        <end position="234"/>
    </location>
</feature>
<feature type="helix" evidence="6">
    <location>
        <begin position="237"/>
        <end position="239"/>
    </location>
</feature>
<feature type="strand" evidence="6">
    <location>
        <begin position="241"/>
        <end position="245"/>
    </location>
</feature>
<feature type="strand" evidence="6">
    <location>
        <begin position="248"/>
        <end position="253"/>
    </location>
</feature>
<feature type="helix" evidence="6">
    <location>
        <begin position="261"/>
        <end position="272"/>
    </location>
</feature>
<feature type="strand" evidence="6">
    <location>
        <begin position="279"/>
        <end position="281"/>
    </location>
</feature>
<feature type="strand" evidence="6">
    <location>
        <begin position="283"/>
        <end position="288"/>
    </location>
</feature>
<feature type="strand" evidence="7">
    <location>
        <begin position="290"/>
        <end position="292"/>
    </location>
</feature>
<feature type="strand" evidence="6">
    <location>
        <begin position="299"/>
        <end position="301"/>
    </location>
</feature>
<feature type="strand" evidence="6">
    <location>
        <begin position="304"/>
        <end position="309"/>
    </location>
</feature>
<feature type="helix" evidence="6">
    <location>
        <begin position="313"/>
        <end position="326"/>
    </location>
</feature>
<feature type="strand" evidence="6">
    <location>
        <begin position="331"/>
        <end position="336"/>
    </location>
</feature>
<feature type="strand" evidence="6">
    <location>
        <begin position="339"/>
        <end position="341"/>
    </location>
</feature>
<feature type="helix" evidence="6">
    <location>
        <begin position="350"/>
        <end position="352"/>
    </location>
</feature>
<feature type="strand" evidence="6">
    <location>
        <begin position="354"/>
        <end position="357"/>
    </location>
</feature>
<feature type="strand" evidence="6">
    <location>
        <begin position="362"/>
        <end position="366"/>
    </location>
</feature>
<feature type="strand" evidence="6">
    <location>
        <begin position="371"/>
        <end position="373"/>
    </location>
</feature>
<feature type="strand" evidence="6">
    <location>
        <begin position="379"/>
        <end position="386"/>
    </location>
</feature>
<feature type="strand" evidence="6">
    <location>
        <begin position="392"/>
        <end position="401"/>
    </location>
</feature>
<feature type="strand" evidence="6">
    <location>
        <begin position="408"/>
        <end position="411"/>
    </location>
</feature>
<feature type="strand" evidence="6">
    <location>
        <begin position="413"/>
        <end position="416"/>
    </location>
</feature>
<feature type="strand" evidence="6">
    <location>
        <begin position="419"/>
        <end position="423"/>
    </location>
</feature>
<feature type="strand" evidence="6">
    <location>
        <begin position="432"/>
        <end position="441"/>
    </location>
</feature>
<feature type="strand" evidence="6">
    <location>
        <begin position="446"/>
        <end position="450"/>
    </location>
</feature>
<feature type="strand" evidence="6">
    <location>
        <begin position="458"/>
        <end position="462"/>
    </location>
</feature>
<name>PAD_PORGI</name>